<feature type="chain" id="PRO_0000340452" description="Urease accessory protein UreD">
    <location>
        <begin position="1"/>
        <end position="274"/>
    </location>
</feature>
<gene>
    <name evidence="1" type="primary">ureD</name>
    <name type="ordered locus">Ent638_3463</name>
</gene>
<protein>
    <recommendedName>
        <fullName evidence="1">Urease accessory protein UreD</fullName>
    </recommendedName>
</protein>
<comment type="function">
    <text evidence="1">Required for maturation of urease via the functional incorporation of the urease nickel metallocenter.</text>
</comment>
<comment type="subunit">
    <text evidence="1">UreD, UreF and UreG form a complex that acts as a GTP-hydrolysis-dependent molecular chaperone, activating the urease apoprotein by helping to assemble the nickel containing metallocenter of UreC. The UreE protein probably delivers the nickel.</text>
</comment>
<comment type="subcellular location">
    <subcellularLocation>
        <location evidence="1">Cytoplasm</location>
    </subcellularLocation>
</comment>
<comment type="similarity">
    <text evidence="1">Belongs to the UreD family.</text>
</comment>
<reference key="1">
    <citation type="journal article" date="2010" name="PLoS Genet.">
        <title>Genome sequence of the plant growth promoting endophytic bacterium Enterobacter sp. 638.</title>
        <authorList>
            <person name="Taghavi S."/>
            <person name="van der Lelie D."/>
            <person name="Hoffman A."/>
            <person name="Zhang Y.B."/>
            <person name="Walla M.D."/>
            <person name="Vangronsveld J."/>
            <person name="Newman L."/>
            <person name="Monchy S."/>
        </authorList>
    </citation>
    <scope>NUCLEOTIDE SEQUENCE [LARGE SCALE GENOMIC DNA]</scope>
    <source>
        <strain>638</strain>
    </source>
</reference>
<keyword id="KW-0143">Chaperone</keyword>
<keyword id="KW-0963">Cytoplasm</keyword>
<keyword id="KW-0996">Nickel insertion</keyword>
<sequence>MQGTPAKKHTHGWQASLALQFCHTPEKTVLHSARHVGPLTVQRPFYPEEETCHLYLLHPPGGIVGGDELNISVQLDPNSHALITMPGAGKFYRSSGPLARLNQHFFLEENATLEWLPQDTIFFPGANAVLQSVFHLHHSSRLLAWELFCLGRPVINETFSHGTIESRLEVWLDDEPLLIERQHLADGDLTTVANHPWIGTLLCYPASDALLEGVREKLVTLDNFAGATLTDGLLSIRFLSHDNLICQRAMREIWQCLRPHVIAKTPHPPRIWQT</sequence>
<dbReference type="EMBL" id="CP000653">
    <property type="protein sequence ID" value="ABP62122.1"/>
    <property type="molecule type" value="Genomic_DNA"/>
</dbReference>
<dbReference type="RefSeq" id="WP_015960450.1">
    <property type="nucleotide sequence ID" value="NC_009436.1"/>
</dbReference>
<dbReference type="SMR" id="A4WEJ2"/>
<dbReference type="STRING" id="399742.Ent638_3463"/>
<dbReference type="KEGG" id="ent:Ent638_3463"/>
<dbReference type="eggNOG" id="COG0829">
    <property type="taxonomic scope" value="Bacteria"/>
</dbReference>
<dbReference type="HOGENOM" id="CLU_056339_0_0_6"/>
<dbReference type="OrthoDB" id="9798842at2"/>
<dbReference type="Proteomes" id="UP000000230">
    <property type="component" value="Chromosome"/>
</dbReference>
<dbReference type="GO" id="GO:0005737">
    <property type="term" value="C:cytoplasm"/>
    <property type="evidence" value="ECO:0007669"/>
    <property type="project" value="UniProtKB-SubCell"/>
</dbReference>
<dbReference type="GO" id="GO:0016151">
    <property type="term" value="F:nickel cation binding"/>
    <property type="evidence" value="ECO:0007669"/>
    <property type="project" value="UniProtKB-UniRule"/>
</dbReference>
<dbReference type="HAMAP" id="MF_01384">
    <property type="entry name" value="UreD"/>
    <property type="match status" value="1"/>
</dbReference>
<dbReference type="InterPro" id="IPR002669">
    <property type="entry name" value="UreD"/>
</dbReference>
<dbReference type="PANTHER" id="PTHR33643">
    <property type="entry name" value="UREASE ACCESSORY PROTEIN D"/>
    <property type="match status" value="1"/>
</dbReference>
<dbReference type="PANTHER" id="PTHR33643:SF1">
    <property type="entry name" value="UREASE ACCESSORY PROTEIN D"/>
    <property type="match status" value="1"/>
</dbReference>
<dbReference type="Pfam" id="PF01774">
    <property type="entry name" value="UreD"/>
    <property type="match status" value="1"/>
</dbReference>
<evidence type="ECO:0000255" key="1">
    <source>
        <dbReference type="HAMAP-Rule" id="MF_01384"/>
    </source>
</evidence>
<organism>
    <name type="scientific">Enterobacter sp. (strain 638)</name>
    <dbReference type="NCBI Taxonomy" id="399742"/>
    <lineage>
        <taxon>Bacteria</taxon>
        <taxon>Pseudomonadati</taxon>
        <taxon>Pseudomonadota</taxon>
        <taxon>Gammaproteobacteria</taxon>
        <taxon>Enterobacterales</taxon>
        <taxon>Enterobacteriaceae</taxon>
        <taxon>Enterobacter</taxon>
    </lineage>
</organism>
<proteinExistence type="inferred from homology"/>
<accession>A4WEJ2</accession>
<name>URED_ENT38</name>